<keyword id="KW-1003">Cell membrane</keyword>
<keyword id="KW-0170">Cobalt</keyword>
<keyword id="KW-0472">Membrane</keyword>
<keyword id="KW-0484">Methanogenesis</keyword>
<keyword id="KW-0489">Methyltransferase</keyword>
<keyword id="KW-0554">One-carbon metabolism</keyword>
<keyword id="KW-1185">Reference proteome</keyword>
<keyword id="KW-0808">Transferase</keyword>
<keyword id="KW-1278">Translocase</keyword>
<keyword id="KW-0812">Transmembrane</keyword>
<keyword id="KW-1133">Transmembrane helix</keyword>
<gene>
    <name evidence="2" type="primary">mtrA1</name>
    <name type="ordered locus">MTH_1159</name>
</gene>
<accession>O27227</accession>
<name>MTRA1_METTH</name>
<dbReference type="EC" id="7.2.1.4" evidence="2"/>
<dbReference type="EMBL" id="AE000666">
    <property type="protein sequence ID" value="AAB85648.1"/>
    <property type="molecule type" value="Genomic_DNA"/>
</dbReference>
<dbReference type="PIR" id="D69021">
    <property type="entry name" value="D69021"/>
</dbReference>
<dbReference type="SMR" id="O27227"/>
<dbReference type="FunCoup" id="O27227">
    <property type="interactions" value="68"/>
</dbReference>
<dbReference type="IntAct" id="O27227">
    <property type="interactions" value="6"/>
</dbReference>
<dbReference type="STRING" id="187420.MTH_1159"/>
<dbReference type="PaxDb" id="187420-MTH_1159"/>
<dbReference type="EnsemblBacteria" id="AAB85648">
    <property type="protein sequence ID" value="AAB85648"/>
    <property type="gene ID" value="MTH_1159"/>
</dbReference>
<dbReference type="KEGG" id="mth:MTH_1159"/>
<dbReference type="PATRIC" id="fig|187420.15.peg.1136"/>
<dbReference type="HOGENOM" id="CLU_100863_0_0_2"/>
<dbReference type="InParanoid" id="O27227"/>
<dbReference type="BioCyc" id="MetaCyc:MTRAMAUTO-MONOMER"/>
<dbReference type="UniPathway" id="UPA00640">
    <property type="reaction ID" value="UER00698"/>
</dbReference>
<dbReference type="Proteomes" id="UP000005223">
    <property type="component" value="Chromosome"/>
</dbReference>
<dbReference type="GO" id="GO:0005886">
    <property type="term" value="C:plasma membrane"/>
    <property type="evidence" value="ECO:0007669"/>
    <property type="project" value="UniProtKB-SubCell"/>
</dbReference>
<dbReference type="GO" id="GO:0050897">
    <property type="term" value="F:cobalt ion binding"/>
    <property type="evidence" value="ECO:0007669"/>
    <property type="project" value="InterPro"/>
</dbReference>
<dbReference type="GO" id="GO:0030269">
    <property type="term" value="F:tetrahydromethanopterin S-methyltransferase activity"/>
    <property type="evidence" value="ECO:0007669"/>
    <property type="project" value="UniProtKB-UniRule"/>
</dbReference>
<dbReference type="GO" id="GO:0019386">
    <property type="term" value="P:methanogenesis, from carbon dioxide"/>
    <property type="evidence" value="ECO:0007669"/>
    <property type="project" value="UniProtKB-UniRule"/>
</dbReference>
<dbReference type="GO" id="GO:0032259">
    <property type="term" value="P:methylation"/>
    <property type="evidence" value="ECO:0007669"/>
    <property type="project" value="UniProtKB-KW"/>
</dbReference>
<dbReference type="GO" id="GO:0006730">
    <property type="term" value="P:one-carbon metabolic process"/>
    <property type="evidence" value="ECO:0007669"/>
    <property type="project" value="UniProtKB-UniRule"/>
</dbReference>
<dbReference type="HAMAP" id="MF_01093">
    <property type="entry name" value="MtrA"/>
    <property type="match status" value="1"/>
</dbReference>
<dbReference type="InterPro" id="IPR030688">
    <property type="entry name" value="MeTrfase_MtrA/MtxA"/>
</dbReference>
<dbReference type="InterPro" id="IPR005778">
    <property type="entry name" value="MtrA"/>
</dbReference>
<dbReference type="NCBIfam" id="TIGR01111">
    <property type="entry name" value="mtrA"/>
    <property type="match status" value="1"/>
</dbReference>
<dbReference type="NCBIfam" id="NF002126">
    <property type="entry name" value="PRK00964.1-4"/>
    <property type="match status" value="1"/>
</dbReference>
<dbReference type="Pfam" id="PF04208">
    <property type="entry name" value="MtrA"/>
    <property type="match status" value="1"/>
</dbReference>
<dbReference type="PIRSF" id="PIRSF500207">
    <property type="entry name" value="MtrA"/>
    <property type="match status" value="1"/>
</dbReference>
<dbReference type="PIRSF" id="PIRSF009452">
    <property type="entry name" value="MtrA_MtxA"/>
    <property type="match status" value="1"/>
</dbReference>
<comment type="function">
    <text evidence="2">Part of a complex that catalyzes the formation of methyl-coenzyme M and tetrahydromethanopterin from coenzyme M and methyl-tetrahydromethanopterin. This is an energy-conserving, sodium-ion translocating step.</text>
</comment>
<comment type="catalytic activity">
    <reaction evidence="2">
        <text>5-methyl-5,6,7,8-tetrahydromethanopterin + coenzyme M + 2 Na(+)(in) = 5,6,7,8-tetrahydromethanopterin + methyl-coenzyme M + 2 Na(+)(out)</text>
        <dbReference type="Rhea" id="RHEA:53492"/>
        <dbReference type="ChEBI" id="CHEBI:29101"/>
        <dbReference type="ChEBI" id="CHEBI:58103"/>
        <dbReference type="ChEBI" id="CHEBI:58116"/>
        <dbReference type="ChEBI" id="CHEBI:58286"/>
        <dbReference type="ChEBI" id="CHEBI:58319"/>
        <dbReference type="EC" id="7.2.1.4"/>
    </reaction>
</comment>
<comment type="cofactor">
    <cofactor evidence="2">
        <name>5-hydroxybenzimidazolylcob(I)amide</name>
        <dbReference type="ChEBI" id="CHEBI:60494"/>
    </cofactor>
    <text evidence="2">Binds 1 5-hydroxybenzimidazolylcobamide group.</text>
</comment>
<comment type="pathway">
    <text evidence="2">One-carbon metabolism; methanogenesis from CO(2); methyl-coenzyme M from 5,10-methylene-5,6,7,8-tetrahydromethanopterin: step 2/2.</text>
</comment>
<comment type="subunit">
    <text evidence="2">The complex is composed of 8 subunits; MtrA, MtrB, MtrC, MtrD, MtrE, MtrF, MtrG and MtrH.</text>
</comment>
<comment type="subcellular location">
    <subcellularLocation>
        <location evidence="2">Cell membrane</location>
        <topology evidence="2">Single-pass membrane protein</topology>
    </subcellularLocation>
</comment>
<comment type="similarity">
    <text evidence="2">Belongs to the MtrA family.</text>
</comment>
<proteinExistence type="inferred from homology"/>
<sequence>MVEKKSPAEGWPVVNGDYIVGDPESPVAATTLASHIEDVPVEAGAAIAGPCKTENLGIEKMIANLISNPNIRFLILCGSEVQGHITGQSIEALHQNGVDPDKRNIIGATGAIPYIENIPDEGIERFQKQLEIVNLIDVEDADAIKAKVKECIEKDPGAFEEEAMVIKVEEGGEEEEGEEVKPVAPETALIEARMRNIQTQVKMIGSTNRMFAGMYSGKVQGIMIGLAFTLTLGILLLV</sequence>
<feature type="initiator methionine" description="Removed" evidence="1">
    <location>
        <position position="1"/>
    </location>
</feature>
<feature type="chain" id="PRO_0000147507" description="Tetrahydromethanopterin S-methyltransferase subunit A 1">
    <location>
        <begin position="2"/>
        <end position="238"/>
    </location>
</feature>
<feature type="topological domain" description="Cytoplasmic" evidence="2">
    <location>
        <begin position="2"/>
        <end position="218"/>
    </location>
</feature>
<feature type="transmembrane region" description="Helical" evidence="2">
    <location>
        <begin position="219"/>
        <end position="237"/>
    </location>
</feature>
<feature type="topological domain" description="Extracellular" evidence="2">
    <location>
        <position position="238"/>
    </location>
</feature>
<feature type="binding site" evidence="2">
    <location>
        <position position="84"/>
    </location>
    <ligand>
        <name>5-hydroxybenzimidazolylcob(I)amide</name>
        <dbReference type="ChEBI" id="CHEBI:60494"/>
        <note>cofactor</note>
    </ligand>
</feature>
<organism>
    <name type="scientific">Methanothermobacter thermautotrophicus (strain ATCC 29096 / DSM 1053 / JCM 10044 / NBRC 100330 / Delta H)</name>
    <name type="common">Methanobacterium thermoautotrophicum</name>
    <dbReference type="NCBI Taxonomy" id="187420"/>
    <lineage>
        <taxon>Archaea</taxon>
        <taxon>Methanobacteriati</taxon>
        <taxon>Methanobacteriota</taxon>
        <taxon>Methanomada group</taxon>
        <taxon>Methanobacteria</taxon>
        <taxon>Methanobacteriales</taxon>
        <taxon>Methanobacteriaceae</taxon>
        <taxon>Methanothermobacter</taxon>
    </lineage>
</organism>
<reference key="1">
    <citation type="journal article" date="1997" name="J. Bacteriol.">
        <title>Complete genome sequence of Methanobacterium thermoautotrophicum deltaH: functional analysis and comparative genomics.</title>
        <authorList>
            <person name="Smith D.R."/>
            <person name="Doucette-Stamm L.A."/>
            <person name="Deloughery C."/>
            <person name="Lee H.-M."/>
            <person name="Dubois J."/>
            <person name="Aldredge T."/>
            <person name="Bashirzadeh R."/>
            <person name="Blakely D."/>
            <person name="Cook R."/>
            <person name="Gilbert K."/>
            <person name="Harrison D."/>
            <person name="Hoang L."/>
            <person name="Keagle P."/>
            <person name="Lumm W."/>
            <person name="Pothier B."/>
            <person name="Qiu D."/>
            <person name="Spadafora R."/>
            <person name="Vicare R."/>
            <person name="Wang Y."/>
            <person name="Wierzbowski J."/>
            <person name="Gibson R."/>
            <person name="Jiwani N."/>
            <person name="Caruso A."/>
            <person name="Bush D."/>
            <person name="Safer H."/>
            <person name="Patwell D."/>
            <person name="Prabhakar S."/>
            <person name="McDougall S."/>
            <person name="Shimer G."/>
            <person name="Goyal A."/>
            <person name="Pietrovski S."/>
            <person name="Church G.M."/>
            <person name="Daniels C.J."/>
            <person name="Mao J.-I."/>
            <person name="Rice P."/>
            <person name="Noelling J."/>
            <person name="Reeve J.N."/>
        </authorList>
    </citation>
    <scope>NUCLEOTIDE SEQUENCE [LARGE SCALE GENOMIC DNA]</scope>
    <source>
        <strain>ATCC 29096 / DSM 1053 / JCM 10044 / NBRC 100330 / Delta H</strain>
    </source>
</reference>
<evidence type="ECO:0000250" key="1"/>
<evidence type="ECO:0000255" key="2">
    <source>
        <dbReference type="HAMAP-Rule" id="MF_01093"/>
    </source>
</evidence>
<protein>
    <recommendedName>
        <fullName evidence="2">Tetrahydromethanopterin S-methyltransferase subunit A 1</fullName>
        <ecNumber evidence="2">7.2.1.4</ecNumber>
    </recommendedName>
    <alternativeName>
        <fullName evidence="2">N5-methyltetrahydromethanopterin--coenzyme M methyltransferase subunit A 1</fullName>
    </alternativeName>
</protein>